<name>RADA_SALTY</name>
<comment type="function">
    <text evidence="1">DNA-dependent ATPase involved in processing of recombination intermediates, plays a role in repairing DNA breaks. Stimulates the branch migration of RecA-mediated strand transfer reactions, allowing the 3' invading strand to extend heteroduplex DNA faster. Binds ssDNA in the presence of ADP but not other nucleotides, has ATPase activity that is stimulated by ssDNA and various branched DNA structures, but inhibited by SSB. Does not have RecA's homology-searching function.</text>
</comment>
<comment type="domain">
    <text evidence="1">Has a putative N-terminal zinc-finger, a middle region with homology to RecA with ATPase motifs including the RadA KNRFG motif, while the C-terminus is homologous to Lon protease.</text>
</comment>
<comment type="similarity">
    <text evidence="1">Belongs to the RecA family. RadA subfamily.</text>
</comment>
<comment type="sequence caution">
    <conflict type="frameshift">
        <sequence resource="EMBL" id="M85181"/>
    </conflict>
</comment>
<dbReference type="EC" id="3.6.4.-" evidence="1"/>
<dbReference type="EMBL" id="AE006468">
    <property type="protein sequence ID" value="AAL23394.1"/>
    <property type="molecule type" value="Genomic_DNA"/>
</dbReference>
<dbReference type="EMBL" id="M85181">
    <property type="status" value="NOT_ANNOTATED_CDS"/>
    <property type="molecule type" value="Genomic_DNA"/>
</dbReference>
<dbReference type="PIR" id="A37753">
    <property type="entry name" value="A37753"/>
</dbReference>
<dbReference type="RefSeq" id="NP_463435.1">
    <property type="nucleotide sequence ID" value="NC_003197.2"/>
</dbReference>
<dbReference type="RefSeq" id="WP_001029709.1">
    <property type="nucleotide sequence ID" value="NC_003197.2"/>
</dbReference>
<dbReference type="SMR" id="P24517"/>
<dbReference type="STRING" id="99287.STM4579"/>
<dbReference type="MEROPS" id="S16.A04"/>
<dbReference type="PaxDb" id="99287-STM4579"/>
<dbReference type="GeneID" id="1256105"/>
<dbReference type="KEGG" id="stm:STM4579"/>
<dbReference type="PATRIC" id="fig|99287.12.peg.4822"/>
<dbReference type="HOGENOM" id="CLU_018264_0_1_6"/>
<dbReference type="OMA" id="CPECQAW"/>
<dbReference type="PhylomeDB" id="P24517"/>
<dbReference type="BioCyc" id="SENT99287:STM4579-MONOMER"/>
<dbReference type="Proteomes" id="UP000001014">
    <property type="component" value="Chromosome"/>
</dbReference>
<dbReference type="GO" id="GO:0005524">
    <property type="term" value="F:ATP binding"/>
    <property type="evidence" value="ECO:0007669"/>
    <property type="project" value="UniProtKB-UniRule"/>
</dbReference>
<dbReference type="GO" id="GO:0016887">
    <property type="term" value="F:ATP hydrolysis activity"/>
    <property type="evidence" value="ECO:0007669"/>
    <property type="project" value="InterPro"/>
</dbReference>
<dbReference type="GO" id="GO:0140664">
    <property type="term" value="F:ATP-dependent DNA damage sensor activity"/>
    <property type="evidence" value="ECO:0007669"/>
    <property type="project" value="InterPro"/>
</dbReference>
<dbReference type="GO" id="GO:0003684">
    <property type="term" value="F:damaged DNA binding"/>
    <property type="evidence" value="ECO:0007669"/>
    <property type="project" value="InterPro"/>
</dbReference>
<dbReference type="GO" id="GO:0008270">
    <property type="term" value="F:zinc ion binding"/>
    <property type="evidence" value="ECO:0007669"/>
    <property type="project" value="UniProtKB-KW"/>
</dbReference>
<dbReference type="GO" id="GO:0000725">
    <property type="term" value="P:recombinational repair"/>
    <property type="evidence" value="ECO:0000318"/>
    <property type="project" value="GO_Central"/>
</dbReference>
<dbReference type="CDD" id="cd01121">
    <property type="entry name" value="RadA_SMS_N"/>
    <property type="match status" value="1"/>
</dbReference>
<dbReference type="FunFam" id="3.30.230.10:FF:000011">
    <property type="entry name" value="DNA repair protein RadA"/>
    <property type="match status" value="1"/>
</dbReference>
<dbReference type="FunFam" id="3.40.50.300:FF:000050">
    <property type="entry name" value="DNA repair protein RadA"/>
    <property type="match status" value="1"/>
</dbReference>
<dbReference type="Gene3D" id="3.30.230.10">
    <property type="match status" value="1"/>
</dbReference>
<dbReference type="Gene3D" id="3.40.50.300">
    <property type="entry name" value="P-loop containing nucleotide triphosphate hydrolases"/>
    <property type="match status" value="1"/>
</dbReference>
<dbReference type="HAMAP" id="MF_01498">
    <property type="entry name" value="RadA_bact"/>
    <property type="match status" value="1"/>
</dbReference>
<dbReference type="InterPro" id="IPR003593">
    <property type="entry name" value="AAA+_ATPase"/>
</dbReference>
<dbReference type="InterPro" id="IPR004504">
    <property type="entry name" value="DNA_repair_RadA"/>
</dbReference>
<dbReference type="InterPro" id="IPR027417">
    <property type="entry name" value="P-loop_NTPase"/>
</dbReference>
<dbReference type="InterPro" id="IPR020588">
    <property type="entry name" value="RecA_ATP-bd"/>
</dbReference>
<dbReference type="InterPro" id="IPR020568">
    <property type="entry name" value="Ribosomal_Su5_D2-typ_SF"/>
</dbReference>
<dbReference type="InterPro" id="IPR014721">
    <property type="entry name" value="Ribsml_uS5_D2-typ_fold_subgr"/>
</dbReference>
<dbReference type="InterPro" id="IPR041166">
    <property type="entry name" value="Rubredoxin_2"/>
</dbReference>
<dbReference type="NCBIfam" id="TIGR00416">
    <property type="entry name" value="sms"/>
    <property type="match status" value="1"/>
</dbReference>
<dbReference type="PANTHER" id="PTHR32472">
    <property type="entry name" value="DNA REPAIR PROTEIN RADA"/>
    <property type="match status" value="1"/>
</dbReference>
<dbReference type="PANTHER" id="PTHR32472:SF10">
    <property type="entry name" value="DNA REPAIR PROTEIN RADA-LIKE PROTEIN"/>
    <property type="match status" value="1"/>
</dbReference>
<dbReference type="Pfam" id="PF13481">
    <property type="entry name" value="AAA_25"/>
    <property type="match status" value="1"/>
</dbReference>
<dbReference type="Pfam" id="PF13541">
    <property type="entry name" value="ChlI"/>
    <property type="match status" value="1"/>
</dbReference>
<dbReference type="Pfam" id="PF18073">
    <property type="entry name" value="Zn_ribbon_LapB"/>
    <property type="match status" value="1"/>
</dbReference>
<dbReference type="PRINTS" id="PR01874">
    <property type="entry name" value="DNAREPAIRADA"/>
</dbReference>
<dbReference type="SMART" id="SM00382">
    <property type="entry name" value="AAA"/>
    <property type="match status" value="1"/>
</dbReference>
<dbReference type="SUPFAM" id="SSF52540">
    <property type="entry name" value="P-loop containing nucleoside triphosphate hydrolases"/>
    <property type="match status" value="1"/>
</dbReference>
<dbReference type="SUPFAM" id="SSF54211">
    <property type="entry name" value="Ribosomal protein S5 domain 2-like"/>
    <property type="match status" value="1"/>
</dbReference>
<dbReference type="PROSITE" id="PS50162">
    <property type="entry name" value="RECA_2"/>
    <property type="match status" value="1"/>
</dbReference>
<evidence type="ECO:0000255" key="1">
    <source>
        <dbReference type="HAMAP-Rule" id="MF_01498"/>
    </source>
</evidence>
<sequence>MAKAPKRAFVCNECGADYPRWQGQCSACHAWNTITEVRLAASPTVARNERLSGYAGSAGVSKVQKLSDISLEELPRFSTGFKEFDRVLGGGVVPGSAILIGGNPGAGKSTLLLQTLCKLAEQMKTLYVTGEESLQQVAMRAHRLGLPTANLNMLSETSIEQICLIAEEEQPKLMVIDSIQVMHMADIQSSPGSVAQVRETAAYLTRFAKTRGVAIVMVGHVTKDGSLAGPKVLEHCIDCSVLLDGDADSRFRTLRSHKNRFGAVNELGVFAMTEQGLREVSNPSAIFLSRGDEVTSGSSVMVVWEGTRPLLVEIQALVDHSMMANPRRVAVGLEQNRLAILLAVLHRHGGLQMSDQDVFVNVVGGVKVTETSADLALLLAMVSSLRDRPLPQDLVVFGEVGLAGEIRPVPSGQERISEAAKHGFRRAIVPAANVPKKPPEGMLVFGVKKLADALSVFDDL</sequence>
<organism>
    <name type="scientific">Salmonella typhimurium (strain LT2 / SGSC1412 / ATCC 700720)</name>
    <dbReference type="NCBI Taxonomy" id="99287"/>
    <lineage>
        <taxon>Bacteria</taxon>
        <taxon>Pseudomonadati</taxon>
        <taxon>Pseudomonadota</taxon>
        <taxon>Gammaproteobacteria</taxon>
        <taxon>Enterobacterales</taxon>
        <taxon>Enterobacteriaceae</taxon>
        <taxon>Salmonella</taxon>
    </lineage>
</organism>
<protein>
    <recommendedName>
        <fullName evidence="1">DNA repair protein RadA</fullName>
        <ecNumber evidence="1">3.6.4.-</ecNumber>
    </recommendedName>
    <alternativeName>
        <fullName evidence="1">Branch migration protein RadA</fullName>
    </alternativeName>
</protein>
<feature type="chain" id="PRO_0000187937" description="DNA repair protein RadA">
    <location>
        <begin position="1"/>
        <end position="460"/>
    </location>
</feature>
<feature type="zinc finger region" description="C4-type" evidence="1">
    <location>
        <begin position="11"/>
        <end position="28"/>
    </location>
</feature>
<feature type="region of interest" description="Lon-protease-like" evidence="1">
    <location>
        <begin position="357"/>
        <end position="460"/>
    </location>
</feature>
<feature type="short sequence motif" description="RadA KNRFG motif" evidence="1">
    <location>
        <begin position="258"/>
        <end position="262"/>
    </location>
</feature>
<feature type="binding site" evidence="1">
    <location>
        <begin position="102"/>
        <end position="109"/>
    </location>
    <ligand>
        <name>ATP</name>
        <dbReference type="ChEBI" id="CHEBI:30616"/>
    </ligand>
</feature>
<proteinExistence type="inferred from homology"/>
<gene>
    <name evidence="1" type="primary">radA</name>
    <name type="ordered locus">STM4579</name>
</gene>
<accession>P24517</accession>
<keyword id="KW-0067">ATP-binding</keyword>
<keyword id="KW-0227">DNA damage</keyword>
<keyword id="KW-0234">DNA repair</keyword>
<keyword id="KW-0238">DNA-binding</keyword>
<keyword id="KW-0378">Hydrolase</keyword>
<keyword id="KW-0479">Metal-binding</keyword>
<keyword id="KW-0547">Nucleotide-binding</keyword>
<keyword id="KW-1185">Reference proteome</keyword>
<keyword id="KW-0346">Stress response</keyword>
<keyword id="KW-0862">Zinc</keyword>
<keyword id="KW-0863">Zinc-finger</keyword>
<reference key="1">
    <citation type="journal article" date="2001" name="Nature">
        <title>Complete genome sequence of Salmonella enterica serovar Typhimurium LT2.</title>
        <authorList>
            <person name="McClelland M."/>
            <person name="Sanderson K.E."/>
            <person name="Spieth J."/>
            <person name="Clifton S.W."/>
            <person name="Latreille P."/>
            <person name="Courtney L."/>
            <person name="Porwollik S."/>
            <person name="Ali J."/>
            <person name="Dante M."/>
            <person name="Du F."/>
            <person name="Hou S."/>
            <person name="Layman D."/>
            <person name="Leonard S."/>
            <person name="Nguyen C."/>
            <person name="Scott K."/>
            <person name="Holmes A."/>
            <person name="Grewal N."/>
            <person name="Mulvaney E."/>
            <person name="Ryan E."/>
            <person name="Sun H."/>
            <person name="Florea L."/>
            <person name="Miller W."/>
            <person name="Stoneking T."/>
            <person name="Nhan M."/>
            <person name="Waterston R."/>
            <person name="Wilson R.K."/>
        </authorList>
    </citation>
    <scope>NUCLEOTIDE SEQUENCE [LARGE SCALE GENOMIC DNA]</scope>
    <source>
        <strain>LT2 / SGSC1412 / ATCC 700720</strain>
    </source>
</reference>
<reference key="2">
    <citation type="journal article" date="1990" name="J. Bacteriol.">
        <title>Regulation of NAD metabolism in Salmonella typhimurium: molecular sequence analysis of the bifunctional nadR regulator and the nadA-pnuC operon.</title>
        <authorList>
            <person name="Foster J.W."/>
            <person name="Park Y.K."/>
            <person name="Penfound T."/>
            <person name="Fenger T."/>
            <person name="Spector M.P."/>
        </authorList>
    </citation>
    <scope>NUCLEOTIDE SEQUENCE [GENOMIC DNA] OF 163-460</scope>
    <source>
        <strain>LT2</strain>
    </source>
</reference>